<proteinExistence type="inferred from homology"/>
<dbReference type="EC" id="6.1.1.1" evidence="1"/>
<dbReference type="EMBL" id="CP001161">
    <property type="protein sequence ID" value="ACL30494.1"/>
    <property type="molecule type" value="Genomic_DNA"/>
</dbReference>
<dbReference type="RefSeq" id="WP_009874077.1">
    <property type="nucleotide sequence ID" value="NC_011833.1"/>
</dbReference>
<dbReference type="SMR" id="B8D8S2"/>
<dbReference type="KEGG" id="bap:BUAP5A_119"/>
<dbReference type="HOGENOM" id="CLU_024003_0_3_6"/>
<dbReference type="OrthoDB" id="9804243at2"/>
<dbReference type="Proteomes" id="UP000006904">
    <property type="component" value="Chromosome"/>
</dbReference>
<dbReference type="GO" id="GO:0005829">
    <property type="term" value="C:cytosol"/>
    <property type="evidence" value="ECO:0007669"/>
    <property type="project" value="TreeGrafter"/>
</dbReference>
<dbReference type="GO" id="GO:0005524">
    <property type="term" value="F:ATP binding"/>
    <property type="evidence" value="ECO:0007669"/>
    <property type="project" value="UniProtKB-UniRule"/>
</dbReference>
<dbReference type="GO" id="GO:0003723">
    <property type="term" value="F:RNA binding"/>
    <property type="evidence" value="ECO:0007669"/>
    <property type="project" value="UniProtKB-KW"/>
</dbReference>
<dbReference type="GO" id="GO:0004831">
    <property type="term" value="F:tyrosine-tRNA ligase activity"/>
    <property type="evidence" value="ECO:0007669"/>
    <property type="project" value="UniProtKB-UniRule"/>
</dbReference>
<dbReference type="GO" id="GO:0006437">
    <property type="term" value="P:tyrosyl-tRNA aminoacylation"/>
    <property type="evidence" value="ECO:0007669"/>
    <property type="project" value="UniProtKB-UniRule"/>
</dbReference>
<dbReference type="CDD" id="cd00805">
    <property type="entry name" value="TyrRS_core"/>
    <property type="match status" value="1"/>
</dbReference>
<dbReference type="FunFam" id="1.10.240.10:FF:000001">
    <property type="entry name" value="Tyrosine--tRNA ligase"/>
    <property type="match status" value="1"/>
</dbReference>
<dbReference type="FunFam" id="3.40.50.620:FF:000008">
    <property type="entry name" value="Tyrosine--tRNA ligase"/>
    <property type="match status" value="1"/>
</dbReference>
<dbReference type="Gene3D" id="3.40.50.620">
    <property type="entry name" value="HUPs"/>
    <property type="match status" value="1"/>
</dbReference>
<dbReference type="Gene3D" id="3.10.290.10">
    <property type="entry name" value="RNA-binding S4 domain"/>
    <property type="match status" value="1"/>
</dbReference>
<dbReference type="Gene3D" id="1.10.240.10">
    <property type="entry name" value="Tyrosyl-Transfer RNA Synthetase"/>
    <property type="match status" value="1"/>
</dbReference>
<dbReference type="HAMAP" id="MF_02006">
    <property type="entry name" value="Tyr_tRNA_synth_type1"/>
    <property type="match status" value="1"/>
</dbReference>
<dbReference type="InterPro" id="IPR002305">
    <property type="entry name" value="aa-tRNA-synth_Ic"/>
</dbReference>
<dbReference type="InterPro" id="IPR014729">
    <property type="entry name" value="Rossmann-like_a/b/a_fold"/>
</dbReference>
<dbReference type="InterPro" id="IPR036986">
    <property type="entry name" value="S4_RNA-bd_sf"/>
</dbReference>
<dbReference type="InterPro" id="IPR054608">
    <property type="entry name" value="SYY-like_C"/>
</dbReference>
<dbReference type="InterPro" id="IPR002307">
    <property type="entry name" value="Tyr-tRNA-ligase"/>
</dbReference>
<dbReference type="InterPro" id="IPR024088">
    <property type="entry name" value="Tyr-tRNA-ligase_bac-type"/>
</dbReference>
<dbReference type="InterPro" id="IPR024107">
    <property type="entry name" value="Tyr-tRNA-ligase_bac_1"/>
</dbReference>
<dbReference type="NCBIfam" id="TIGR00234">
    <property type="entry name" value="tyrS"/>
    <property type="match status" value="1"/>
</dbReference>
<dbReference type="PANTHER" id="PTHR11766:SF0">
    <property type="entry name" value="TYROSINE--TRNA LIGASE, MITOCHONDRIAL"/>
    <property type="match status" value="1"/>
</dbReference>
<dbReference type="PANTHER" id="PTHR11766">
    <property type="entry name" value="TYROSYL-TRNA SYNTHETASE"/>
    <property type="match status" value="1"/>
</dbReference>
<dbReference type="Pfam" id="PF22421">
    <property type="entry name" value="SYY_C-terminal"/>
    <property type="match status" value="1"/>
</dbReference>
<dbReference type="Pfam" id="PF00579">
    <property type="entry name" value="tRNA-synt_1b"/>
    <property type="match status" value="1"/>
</dbReference>
<dbReference type="PRINTS" id="PR01040">
    <property type="entry name" value="TRNASYNTHTYR"/>
</dbReference>
<dbReference type="SUPFAM" id="SSF55174">
    <property type="entry name" value="Alpha-L RNA-binding motif"/>
    <property type="match status" value="1"/>
</dbReference>
<dbReference type="SUPFAM" id="SSF52374">
    <property type="entry name" value="Nucleotidylyl transferase"/>
    <property type="match status" value="1"/>
</dbReference>
<dbReference type="PROSITE" id="PS50889">
    <property type="entry name" value="S4"/>
    <property type="match status" value="1"/>
</dbReference>
<comment type="function">
    <text evidence="1">Catalyzes the attachment of tyrosine to tRNA(Tyr) in a two-step reaction: tyrosine is first activated by ATP to form Tyr-AMP and then transferred to the acceptor end of tRNA(Tyr).</text>
</comment>
<comment type="catalytic activity">
    <reaction evidence="1">
        <text>tRNA(Tyr) + L-tyrosine + ATP = L-tyrosyl-tRNA(Tyr) + AMP + diphosphate + H(+)</text>
        <dbReference type="Rhea" id="RHEA:10220"/>
        <dbReference type="Rhea" id="RHEA-COMP:9706"/>
        <dbReference type="Rhea" id="RHEA-COMP:9707"/>
        <dbReference type="ChEBI" id="CHEBI:15378"/>
        <dbReference type="ChEBI" id="CHEBI:30616"/>
        <dbReference type="ChEBI" id="CHEBI:33019"/>
        <dbReference type="ChEBI" id="CHEBI:58315"/>
        <dbReference type="ChEBI" id="CHEBI:78442"/>
        <dbReference type="ChEBI" id="CHEBI:78536"/>
        <dbReference type="ChEBI" id="CHEBI:456215"/>
        <dbReference type="EC" id="6.1.1.1"/>
    </reaction>
</comment>
<comment type="subunit">
    <text evidence="1">Homodimer.</text>
</comment>
<comment type="subcellular location">
    <subcellularLocation>
        <location evidence="1">Cytoplasm</location>
    </subcellularLocation>
</comment>
<comment type="similarity">
    <text evidence="1">Belongs to the class-I aminoacyl-tRNA synthetase family. TyrS type 1 subfamily.</text>
</comment>
<gene>
    <name evidence="1" type="primary">tyrS</name>
    <name type="ordered locus">BUAP5A_119</name>
</gene>
<keyword id="KW-0030">Aminoacyl-tRNA synthetase</keyword>
<keyword id="KW-0067">ATP-binding</keyword>
<keyword id="KW-0963">Cytoplasm</keyword>
<keyword id="KW-0436">Ligase</keyword>
<keyword id="KW-0547">Nucleotide-binding</keyword>
<keyword id="KW-0648">Protein biosynthesis</keyword>
<keyword id="KW-0694">RNA-binding</keyword>
<protein>
    <recommendedName>
        <fullName evidence="1">Tyrosine--tRNA ligase</fullName>
        <ecNumber evidence="1">6.1.1.1</ecNumber>
    </recommendedName>
    <alternativeName>
        <fullName evidence="1">Tyrosyl-tRNA synthetase</fullName>
        <shortName evidence="1">TyrRS</shortName>
    </alternativeName>
</protein>
<feature type="chain" id="PRO_1000189266" description="Tyrosine--tRNA ligase">
    <location>
        <begin position="1"/>
        <end position="422"/>
    </location>
</feature>
<feature type="domain" description="S4 RNA-binding" evidence="1">
    <location>
        <begin position="357"/>
        <end position="414"/>
    </location>
</feature>
<feature type="short sequence motif" description="'HIGH' region">
    <location>
        <begin position="42"/>
        <end position="51"/>
    </location>
</feature>
<feature type="short sequence motif" description="'KMSKS' region">
    <location>
        <begin position="235"/>
        <end position="239"/>
    </location>
</feature>
<feature type="binding site" evidence="1">
    <location>
        <position position="37"/>
    </location>
    <ligand>
        <name>L-tyrosine</name>
        <dbReference type="ChEBI" id="CHEBI:58315"/>
    </ligand>
</feature>
<feature type="binding site" evidence="1">
    <location>
        <position position="175"/>
    </location>
    <ligand>
        <name>L-tyrosine</name>
        <dbReference type="ChEBI" id="CHEBI:58315"/>
    </ligand>
</feature>
<feature type="binding site" evidence="1">
    <location>
        <position position="179"/>
    </location>
    <ligand>
        <name>L-tyrosine</name>
        <dbReference type="ChEBI" id="CHEBI:58315"/>
    </ligand>
</feature>
<feature type="binding site" evidence="1">
    <location>
        <position position="238"/>
    </location>
    <ligand>
        <name>ATP</name>
        <dbReference type="ChEBI" id="CHEBI:30616"/>
    </ligand>
</feature>
<organism>
    <name type="scientific">Buchnera aphidicola subsp. Acyrthosiphon pisum (strain 5A)</name>
    <dbReference type="NCBI Taxonomy" id="563178"/>
    <lineage>
        <taxon>Bacteria</taxon>
        <taxon>Pseudomonadati</taxon>
        <taxon>Pseudomonadota</taxon>
        <taxon>Gammaproteobacteria</taxon>
        <taxon>Enterobacterales</taxon>
        <taxon>Erwiniaceae</taxon>
        <taxon>Buchnera</taxon>
    </lineage>
</organism>
<evidence type="ECO:0000255" key="1">
    <source>
        <dbReference type="HAMAP-Rule" id="MF_02006"/>
    </source>
</evidence>
<name>SYY_BUCA5</name>
<accession>B8D8S2</accession>
<sequence length="422" mass="48689">MSEFNFISRLHNRGLISHITNEDNLSKLIENKSISLYCGFDPTEESLHIGHLLPLIMLKRFQIAGHRPIILIGGATSLIGDPSFKEKERVFNSNYNVNIWTEKITKQISCFLDFNCGKNSAVLLNNNTWFKQINILSFLRDVGKYFSVNTMINRAAVKQRITRPDQGISFTEFSYNLLQAYDFFILNQQYQVDLQIGGADQWGNISSGMHLIHRKTKRVVYGLTVPLLIQSNGIKFGKTESGTVWLDSNKTSPYKFYQFWMNIEDANVYYFLKLFTFIKVSEINKLEKNKNIKNQIINDKSLLAKHITQLVHGKEKLLAAERITKFLFLKNTTHIEESDLQQLKQDGIPFIEVSNVKDLQEALVLTSLAQSRTQAKNMIISNSISINTEKIRKNHIFHEKDKLFGKFTLLSRGKKQHSLLCW</sequence>
<reference key="1">
    <citation type="journal article" date="2009" name="Science">
        <title>The dynamics and time scale of ongoing genomic erosion in symbiotic bacteria.</title>
        <authorList>
            <person name="Moran N.A."/>
            <person name="McLaughlin H.J."/>
            <person name="Sorek R."/>
        </authorList>
    </citation>
    <scope>NUCLEOTIDE SEQUENCE [LARGE SCALE GENOMIC DNA]</scope>
    <source>
        <strain>5A</strain>
    </source>
</reference>